<accession>A6LSN0</accession>
<name>RIMM_CLOB8</name>
<protein>
    <recommendedName>
        <fullName evidence="1">Ribosome maturation factor RimM</fullName>
    </recommendedName>
</protein>
<comment type="function">
    <text evidence="1">An accessory protein needed during the final step in the assembly of 30S ribosomal subunit, possibly for assembly of the head region. Essential for efficient processing of 16S rRNA. May be needed both before and after RbfA during the maturation of 16S rRNA. It has affinity for free ribosomal 30S subunits but not for 70S ribosomes.</text>
</comment>
<comment type="subunit">
    <text evidence="1">Binds ribosomal protein uS19.</text>
</comment>
<comment type="subcellular location">
    <subcellularLocation>
        <location evidence="1">Cytoplasm</location>
    </subcellularLocation>
</comment>
<comment type="domain">
    <text evidence="1">The PRC barrel domain binds ribosomal protein uS19.</text>
</comment>
<comment type="similarity">
    <text evidence="1">Belongs to the RimM family.</text>
</comment>
<organism>
    <name type="scientific">Clostridium beijerinckii (strain ATCC 51743 / NCIMB 8052)</name>
    <name type="common">Clostridium acetobutylicum</name>
    <dbReference type="NCBI Taxonomy" id="290402"/>
    <lineage>
        <taxon>Bacteria</taxon>
        <taxon>Bacillati</taxon>
        <taxon>Bacillota</taxon>
        <taxon>Clostridia</taxon>
        <taxon>Eubacteriales</taxon>
        <taxon>Clostridiaceae</taxon>
        <taxon>Clostridium</taxon>
    </lineage>
</organism>
<gene>
    <name evidence="1" type="primary">rimM</name>
    <name type="ordered locus">Cbei_1178</name>
</gene>
<reference key="1">
    <citation type="submission" date="2007-06" db="EMBL/GenBank/DDBJ databases">
        <title>Complete sequence of Clostridium beijerinckii NCIMB 8052.</title>
        <authorList>
            <consortium name="US DOE Joint Genome Institute"/>
            <person name="Copeland A."/>
            <person name="Lucas S."/>
            <person name="Lapidus A."/>
            <person name="Barry K."/>
            <person name="Detter J.C."/>
            <person name="Glavina del Rio T."/>
            <person name="Hammon N."/>
            <person name="Israni S."/>
            <person name="Dalin E."/>
            <person name="Tice H."/>
            <person name="Pitluck S."/>
            <person name="Sims D."/>
            <person name="Brettin T."/>
            <person name="Bruce D."/>
            <person name="Tapia R."/>
            <person name="Brainard J."/>
            <person name="Schmutz J."/>
            <person name="Larimer F."/>
            <person name="Land M."/>
            <person name="Hauser L."/>
            <person name="Kyrpides N."/>
            <person name="Mikhailova N."/>
            <person name="Bennet G."/>
            <person name="Cann I."/>
            <person name="Chen J.-S."/>
            <person name="Contreras A.L."/>
            <person name="Jones D."/>
            <person name="Kashket E."/>
            <person name="Mitchell W."/>
            <person name="Stoddard S."/>
            <person name="Schwarz W."/>
            <person name="Qureshi N."/>
            <person name="Young M."/>
            <person name="Shi Z."/>
            <person name="Ezeji T."/>
            <person name="White B."/>
            <person name="Blaschek H."/>
            <person name="Richardson P."/>
        </authorList>
    </citation>
    <scope>NUCLEOTIDE SEQUENCE [LARGE SCALE GENOMIC DNA]</scope>
    <source>
        <strain>ATCC 51743 / NCIMB 8052</strain>
    </source>
</reference>
<dbReference type="EMBL" id="CP000721">
    <property type="protein sequence ID" value="ABR33360.1"/>
    <property type="molecule type" value="Genomic_DNA"/>
</dbReference>
<dbReference type="RefSeq" id="WP_011968515.1">
    <property type="nucleotide sequence ID" value="NC_009617.1"/>
</dbReference>
<dbReference type="SMR" id="A6LSN0"/>
<dbReference type="KEGG" id="cbe:Cbei_1178"/>
<dbReference type="eggNOG" id="COG0806">
    <property type="taxonomic scope" value="Bacteria"/>
</dbReference>
<dbReference type="HOGENOM" id="CLU_077636_3_2_9"/>
<dbReference type="Proteomes" id="UP000000565">
    <property type="component" value="Chromosome"/>
</dbReference>
<dbReference type="GO" id="GO:0005737">
    <property type="term" value="C:cytoplasm"/>
    <property type="evidence" value="ECO:0007669"/>
    <property type="project" value="UniProtKB-SubCell"/>
</dbReference>
<dbReference type="GO" id="GO:0005840">
    <property type="term" value="C:ribosome"/>
    <property type="evidence" value="ECO:0007669"/>
    <property type="project" value="InterPro"/>
</dbReference>
<dbReference type="GO" id="GO:0043022">
    <property type="term" value="F:ribosome binding"/>
    <property type="evidence" value="ECO:0007669"/>
    <property type="project" value="InterPro"/>
</dbReference>
<dbReference type="GO" id="GO:0042274">
    <property type="term" value="P:ribosomal small subunit biogenesis"/>
    <property type="evidence" value="ECO:0007669"/>
    <property type="project" value="UniProtKB-UniRule"/>
</dbReference>
<dbReference type="GO" id="GO:0006364">
    <property type="term" value="P:rRNA processing"/>
    <property type="evidence" value="ECO:0007669"/>
    <property type="project" value="UniProtKB-UniRule"/>
</dbReference>
<dbReference type="Gene3D" id="2.30.30.240">
    <property type="entry name" value="PRC-barrel domain"/>
    <property type="match status" value="1"/>
</dbReference>
<dbReference type="Gene3D" id="2.40.30.60">
    <property type="entry name" value="RimM"/>
    <property type="match status" value="1"/>
</dbReference>
<dbReference type="HAMAP" id="MF_00014">
    <property type="entry name" value="Ribosome_mat_RimM"/>
    <property type="match status" value="1"/>
</dbReference>
<dbReference type="InterPro" id="IPR027275">
    <property type="entry name" value="PRC-brl_dom"/>
</dbReference>
<dbReference type="InterPro" id="IPR011033">
    <property type="entry name" value="PRC_barrel-like_sf"/>
</dbReference>
<dbReference type="InterPro" id="IPR011961">
    <property type="entry name" value="RimM"/>
</dbReference>
<dbReference type="InterPro" id="IPR002676">
    <property type="entry name" value="RimM_N"/>
</dbReference>
<dbReference type="InterPro" id="IPR036976">
    <property type="entry name" value="RimM_N_sf"/>
</dbReference>
<dbReference type="InterPro" id="IPR009000">
    <property type="entry name" value="Transl_B-barrel_sf"/>
</dbReference>
<dbReference type="NCBIfam" id="TIGR02273">
    <property type="entry name" value="16S_RimM"/>
    <property type="match status" value="1"/>
</dbReference>
<dbReference type="PANTHER" id="PTHR33692">
    <property type="entry name" value="RIBOSOME MATURATION FACTOR RIMM"/>
    <property type="match status" value="1"/>
</dbReference>
<dbReference type="PANTHER" id="PTHR33692:SF1">
    <property type="entry name" value="RIBOSOME MATURATION FACTOR RIMM"/>
    <property type="match status" value="1"/>
</dbReference>
<dbReference type="Pfam" id="PF05239">
    <property type="entry name" value="PRC"/>
    <property type="match status" value="1"/>
</dbReference>
<dbReference type="Pfam" id="PF01782">
    <property type="entry name" value="RimM"/>
    <property type="match status" value="1"/>
</dbReference>
<dbReference type="SUPFAM" id="SSF50346">
    <property type="entry name" value="PRC-barrel domain"/>
    <property type="match status" value="1"/>
</dbReference>
<dbReference type="SUPFAM" id="SSF50447">
    <property type="entry name" value="Translation proteins"/>
    <property type="match status" value="1"/>
</dbReference>
<sequence>MGNLFKIGQIINTHGIKGEVKVYPLTEDVNKFKRLETVLVGGEEKKILGVKFQKDRVILKIEGIDSMNDAETYKQKYIEIPRENEPELPPDTYYVSDLKECTIYDTNEKEIGRIFDVISTPNNDVYWIKEPKELLIPVLRDIVLDIDIKLKKIIIKPVGEWQDED</sequence>
<keyword id="KW-0143">Chaperone</keyword>
<keyword id="KW-0963">Cytoplasm</keyword>
<keyword id="KW-0690">Ribosome biogenesis</keyword>
<keyword id="KW-0698">rRNA processing</keyword>
<proteinExistence type="inferred from homology"/>
<feature type="chain" id="PRO_1000074022" description="Ribosome maturation factor RimM">
    <location>
        <begin position="1"/>
        <end position="165"/>
    </location>
</feature>
<feature type="domain" description="PRC barrel" evidence="1">
    <location>
        <begin position="90"/>
        <end position="161"/>
    </location>
</feature>
<evidence type="ECO:0000255" key="1">
    <source>
        <dbReference type="HAMAP-Rule" id="MF_00014"/>
    </source>
</evidence>